<gene>
    <name evidence="1" type="primary">psbI</name>
</gene>
<name>PSBI_LEMMI</name>
<evidence type="ECO:0000255" key="1">
    <source>
        <dbReference type="HAMAP-Rule" id="MF_01316"/>
    </source>
</evidence>
<organism>
    <name type="scientific">Lemna minor</name>
    <name type="common">Common duckweed</name>
    <dbReference type="NCBI Taxonomy" id="4472"/>
    <lineage>
        <taxon>Eukaryota</taxon>
        <taxon>Viridiplantae</taxon>
        <taxon>Streptophyta</taxon>
        <taxon>Embryophyta</taxon>
        <taxon>Tracheophyta</taxon>
        <taxon>Spermatophyta</taxon>
        <taxon>Magnoliopsida</taxon>
        <taxon>Liliopsida</taxon>
        <taxon>Araceae</taxon>
        <taxon>Lemnoideae</taxon>
        <taxon>Lemna</taxon>
    </lineage>
</organism>
<feature type="chain" id="PRO_0000353235" description="Photosystem II reaction center protein I">
    <location>
        <begin position="1"/>
        <end position="36"/>
    </location>
</feature>
<feature type="transmembrane region" description="Helical" evidence="1">
    <location>
        <begin position="4"/>
        <end position="24"/>
    </location>
</feature>
<protein>
    <recommendedName>
        <fullName evidence="1">Photosystem II reaction center protein I</fullName>
        <shortName evidence="1">PSII-I</shortName>
    </recommendedName>
    <alternativeName>
        <fullName evidence="1">PSII 4.8 kDa protein</fullName>
    </alternativeName>
</protein>
<reference key="1">
    <citation type="journal article" date="2008" name="J. Mol. Evol.">
        <title>Complete sequence of the Duckweed (Lemna minor) chloroplast genome: structural organization and phylogenetic relationships to other angiosperms.</title>
        <authorList>
            <person name="Mardanov A.V."/>
            <person name="Ravin N.V."/>
            <person name="Kuznetsov B.B."/>
            <person name="Samigullin T.H."/>
            <person name="Antonov A.S."/>
            <person name="Kolganova T.V."/>
            <person name="Skyabin K.G."/>
        </authorList>
    </citation>
    <scope>NUCLEOTIDE SEQUENCE [LARGE SCALE GENOMIC DNA]</scope>
</reference>
<accession>A9L980</accession>
<proteinExistence type="inferred from homology"/>
<dbReference type="EMBL" id="DQ400350">
    <property type="protein sequence ID" value="ABD48479.1"/>
    <property type="molecule type" value="Genomic_DNA"/>
</dbReference>
<dbReference type="RefSeq" id="YP_001595492.1">
    <property type="nucleotide sequence ID" value="NC_010109.1"/>
</dbReference>
<dbReference type="SMR" id="A9L980"/>
<dbReference type="GeneID" id="5787567"/>
<dbReference type="GO" id="GO:0009535">
    <property type="term" value="C:chloroplast thylakoid membrane"/>
    <property type="evidence" value="ECO:0007669"/>
    <property type="project" value="UniProtKB-SubCell"/>
</dbReference>
<dbReference type="GO" id="GO:0009539">
    <property type="term" value="C:photosystem II reaction center"/>
    <property type="evidence" value="ECO:0007669"/>
    <property type="project" value="InterPro"/>
</dbReference>
<dbReference type="GO" id="GO:0015979">
    <property type="term" value="P:photosynthesis"/>
    <property type="evidence" value="ECO:0007669"/>
    <property type="project" value="UniProtKB-UniRule"/>
</dbReference>
<dbReference type="HAMAP" id="MF_01316">
    <property type="entry name" value="PSII_PsbI"/>
    <property type="match status" value="1"/>
</dbReference>
<dbReference type="InterPro" id="IPR003686">
    <property type="entry name" value="PSII_PsbI"/>
</dbReference>
<dbReference type="InterPro" id="IPR037271">
    <property type="entry name" value="PSII_PsbI_sf"/>
</dbReference>
<dbReference type="NCBIfam" id="NF002735">
    <property type="entry name" value="PRK02655.1"/>
    <property type="match status" value="1"/>
</dbReference>
<dbReference type="PANTHER" id="PTHR35772">
    <property type="entry name" value="PHOTOSYSTEM II REACTION CENTER PROTEIN I"/>
    <property type="match status" value="1"/>
</dbReference>
<dbReference type="PANTHER" id="PTHR35772:SF1">
    <property type="entry name" value="PHOTOSYSTEM II REACTION CENTER PROTEIN I"/>
    <property type="match status" value="1"/>
</dbReference>
<dbReference type="Pfam" id="PF02532">
    <property type="entry name" value="PsbI"/>
    <property type="match status" value="1"/>
</dbReference>
<dbReference type="SUPFAM" id="SSF161041">
    <property type="entry name" value="Photosystem II reaction center protein I, PsbI"/>
    <property type="match status" value="1"/>
</dbReference>
<geneLocation type="chloroplast"/>
<comment type="function">
    <text evidence="1">One of the components of the core complex of photosystem II (PSII), required for its stability and/or assembly. PSII is a light-driven water:plastoquinone oxidoreductase that uses light energy to abstract electrons from H(2)O, generating O(2) and a proton gradient subsequently used for ATP formation. It consists of a core antenna complex that captures photons, and an electron transfer chain that converts photonic excitation into a charge separation.</text>
</comment>
<comment type="subunit">
    <text evidence="1">PSII is composed of 1 copy each of membrane proteins PsbA, PsbB, PsbC, PsbD, PsbE, PsbF, PsbH, PsbI, PsbJ, PsbK, PsbL, PsbM, PsbT, PsbX, PsbY, PsbZ, Psb30/Ycf12, at least 3 peripheral proteins of the oxygen-evolving complex and a large number of cofactors. It forms dimeric complexes.</text>
</comment>
<comment type="subcellular location">
    <subcellularLocation>
        <location evidence="1">Plastid</location>
        <location evidence="1">Chloroplast thylakoid membrane</location>
        <topology evidence="1">Single-pass membrane protein</topology>
    </subcellularLocation>
</comment>
<comment type="similarity">
    <text evidence="1">Belongs to the PsbI family.</text>
</comment>
<keyword id="KW-0150">Chloroplast</keyword>
<keyword id="KW-0472">Membrane</keyword>
<keyword id="KW-0602">Photosynthesis</keyword>
<keyword id="KW-0604">Photosystem II</keyword>
<keyword id="KW-0934">Plastid</keyword>
<keyword id="KW-0674">Reaction center</keyword>
<keyword id="KW-0793">Thylakoid</keyword>
<keyword id="KW-0812">Transmembrane</keyword>
<keyword id="KW-1133">Transmembrane helix</keyword>
<sequence length="36" mass="4168">MLTLKLFVYTVVIFFVSLFIFGFLSNDPGRNPGREE</sequence>